<dbReference type="EC" id="2.7.11.1" evidence="2"/>
<dbReference type="EMBL" id="AL161946">
    <property type="protein sequence ID" value="CAB82270.1"/>
    <property type="molecule type" value="Genomic_DNA"/>
</dbReference>
<dbReference type="EMBL" id="CP002688">
    <property type="protein sequence ID" value="AED90358.1"/>
    <property type="molecule type" value="Genomic_DNA"/>
</dbReference>
<dbReference type="EMBL" id="AF361597">
    <property type="protein sequence ID" value="AAK32765.1"/>
    <property type="molecule type" value="mRNA"/>
</dbReference>
<dbReference type="EMBL" id="BT000489">
    <property type="protein sequence ID" value="AAN18058.1"/>
    <property type="molecule type" value="mRNA"/>
</dbReference>
<dbReference type="PIR" id="T48175">
    <property type="entry name" value="T48175"/>
</dbReference>
<dbReference type="RefSeq" id="NP_195774.1">
    <property type="nucleotide sequence ID" value="NM_120232.2"/>
</dbReference>
<dbReference type="SMR" id="Q9M021"/>
<dbReference type="BioGRID" id="16998">
    <property type="interactions" value="25"/>
</dbReference>
<dbReference type="FunCoup" id="Q9M021">
    <property type="interactions" value="66"/>
</dbReference>
<dbReference type="IntAct" id="Q9M021">
    <property type="interactions" value="23"/>
</dbReference>
<dbReference type="STRING" id="3702.Q9M021"/>
<dbReference type="PaxDb" id="3702-AT5G01540.1"/>
<dbReference type="ProteomicsDB" id="238801"/>
<dbReference type="EnsemblPlants" id="AT5G01540.1">
    <property type="protein sequence ID" value="AT5G01540.1"/>
    <property type="gene ID" value="AT5G01540"/>
</dbReference>
<dbReference type="GeneID" id="831722"/>
<dbReference type="Gramene" id="AT5G01540.1">
    <property type="protein sequence ID" value="AT5G01540.1"/>
    <property type="gene ID" value="AT5G01540"/>
</dbReference>
<dbReference type="KEGG" id="ath:AT5G01540"/>
<dbReference type="Araport" id="AT5G01540"/>
<dbReference type="TAIR" id="AT5G01540">
    <property type="gene designation" value="LECRK-VI.2"/>
</dbReference>
<dbReference type="eggNOG" id="ENOG502QTCP">
    <property type="taxonomic scope" value="Eukaryota"/>
</dbReference>
<dbReference type="HOGENOM" id="CLU_000288_62_3_1"/>
<dbReference type="InParanoid" id="Q9M021"/>
<dbReference type="OMA" id="WNARFEI"/>
<dbReference type="PhylomeDB" id="Q9M021"/>
<dbReference type="PRO" id="PR:Q9M021"/>
<dbReference type="Proteomes" id="UP000006548">
    <property type="component" value="Chromosome 5"/>
</dbReference>
<dbReference type="ExpressionAtlas" id="Q9M021">
    <property type="expression patterns" value="baseline and differential"/>
</dbReference>
<dbReference type="GO" id="GO:0005886">
    <property type="term" value="C:plasma membrane"/>
    <property type="evidence" value="ECO:0000314"/>
    <property type="project" value="TAIR"/>
</dbReference>
<dbReference type="GO" id="GO:0005524">
    <property type="term" value="F:ATP binding"/>
    <property type="evidence" value="ECO:0007669"/>
    <property type="project" value="UniProtKB-KW"/>
</dbReference>
<dbReference type="GO" id="GO:0030246">
    <property type="term" value="F:carbohydrate binding"/>
    <property type="evidence" value="ECO:0007669"/>
    <property type="project" value="UniProtKB-KW"/>
</dbReference>
<dbReference type="GO" id="GO:0106310">
    <property type="term" value="F:protein serine kinase activity"/>
    <property type="evidence" value="ECO:0007669"/>
    <property type="project" value="RHEA"/>
</dbReference>
<dbReference type="GO" id="GO:0004674">
    <property type="term" value="F:protein serine/threonine kinase activity"/>
    <property type="evidence" value="ECO:0007669"/>
    <property type="project" value="UniProtKB-KW"/>
</dbReference>
<dbReference type="GO" id="GO:0009738">
    <property type="term" value="P:abscisic acid-activated signaling pathway"/>
    <property type="evidence" value="ECO:0000315"/>
    <property type="project" value="TAIR"/>
</dbReference>
<dbReference type="GO" id="GO:0042742">
    <property type="term" value="P:defense response to bacterium"/>
    <property type="evidence" value="ECO:0000315"/>
    <property type="project" value="UniProtKB"/>
</dbReference>
<dbReference type="GO" id="GO:0002221">
    <property type="term" value="P:pattern recognition receptor signaling pathway"/>
    <property type="evidence" value="ECO:0000315"/>
    <property type="project" value="TAIR"/>
</dbReference>
<dbReference type="GO" id="GO:0009737">
    <property type="term" value="P:response to abscisic acid"/>
    <property type="evidence" value="ECO:0000270"/>
    <property type="project" value="TAIR"/>
</dbReference>
<dbReference type="GO" id="GO:0009845">
    <property type="term" value="P:seed germination"/>
    <property type="evidence" value="ECO:0000315"/>
    <property type="project" value="TAIR"/>
</dbReference>
<dbReference type="CDD" id="cd06899">
    <property type="entry name" value="lectin_legume_LecRK_Arcelin_ConA"/>
    <property type="match status" value="1"/>
</dbReference>
<dbReference type="CDD" id="cd14066">
    <property type="entry name" value="STKc_IRAK"/>
    <property type="match status" value="1"/>
</dbReference>
<dbReference type="FunFam" id="1.10.510.10:FF:000108">
    <property type="entry name" value="L-type lectin-domain containing receptor kinase S.4"/>
    <property type="match status" value="1"/>
</dbReference>
<dbReference type="FunFam" id="2.60.120.200:FF:000096">
    <property type="entry name" value="L-type lectin-domain containing receptor kinase V.9"/>
    <property type="match status" value="1"/>
</dbReference>
<dbReference type="FunFam" id="3.30.200.20:FF:000178">
    <property type="entry name" value="serine/threonine-protein kinase PBS1-like"/>
    <property type="match status" value="1"/>
</dbReference>
<dbReference type="Gene3D" id="2.60.120.200">
    <property type="match status" value="1"/>
</dbReference>
<dbReference type="Gene3D" id="3.30.200.20">
    <property type="entry name" value="Phosphorylase Kinase, domain 1"/>
    <property type="match status" value="1"/>
</dbReference>
<dbReference type="Gene3D" id="1.10.510.10">
    <property type="entry name" value="Transferase(Phosphotransferase) domain 1"/>
    <property type="match status" value="1"/>
</dbReference>
<dbReference type="InterPro" id="IPR013320">
    <property type="entry name" value="ConA-like_dom_sf"/>
</dbReference>
<dbReference type="InterPro" id="IPR011009">
    <property type="entry name" value="Kinase-like_dom_sf"/>
</dbReference>
<dbReference type="InterPro" id="IPR050528">
    <property type="entry name" value="L-type_Lectin-RKs"/>
</dbReference>
<dbReference type="InterPro" id="IPR001220">
    <property type="entry name" value="Legume_lectin_dom"/>
</dbReference>
<dbReference type="InterPro" id="IPR000719">
    <property type="entry name" value="Prot_kinase_dom"/>
</dbReference>
<dbReference type="InterPro" id="IPR017441">
    <property type="entry name" value="Protein_kinase_ATP_BS"/>
</dbReference>
<dbReference type="InterPro" id="IPR008271">
    <property type="entry name" value="Ser/Thr_kinase_AS"/>
</dbReference>
<dbReference type="PANTHER" id="PTHR27007">
    <property type="match status" value="1"/>
</dbReference>
<dbReference type="Pfam" id="PF00139">
    <property type="entry name" value="Lectin_legB"/>
    <property type="match status" value="1"/>
</dbReference>
<dbReference type="Pfam" id="PF00069">
    <property type="entry name" value="Pkinase"/>
    <property type="match status" value="1"/>
</dbReference>
<dbReference type="SMART" id="SM00220">
    <property type="entry name" value="S_TKc"/>
    <property type="match status" value="1"/>
</dbReference>
<dbReference type="SUPFAM" id="SSF49899">
    <property type="entry name" value="Concanavalin A-like lectins/glucanases"/>
    <property type="match status" value="1"/>
</dbReference>
<dbReference type="SUPFAM" id="SSF56112">
    <property type="entry name" value="Protein kinase-like (PK-like)"/>
    <property type="match status" value="1"/>
</dbReference>
<dbReference type="PROSITE" id="PS00107">
    <property type="entry name" value="PROTEIN_KINASE_ATP"/>
    <property type="match status" value="1"/>
</dbReference>
<dbReference type="PROSITE" id="PS50011">
    <property type="entry name" value="PROTEIN_KINASE_DOM"/>
    <property type="match status" value="1"/>
</dbReference>
<dbReference type="PROSITE" id="PS00108">
    <property type="entry name" value="PROTEIN_KINASE_ST"/>
    <property type="match status" value="1"/>
</dbReference>
<comment type="function">
    <text evidence="3">Involved in negative regulation of abscisic acid response in seed germination.</text>
</comment>
<comment type="function">
    <text evidence="4">Involved in resistance response to the pathogenic bacteria Pseudomonas syringae.</text>
</comment>
<comment type="catalytic activity">
    <reaction evidence="2">
        <text>L-seryl-[protein] + ATP = O-phospho-L-seryl-[protein] + ADP + H(+)</text>
        <dbReference type="Rhea" id="RHEA:17989"/>
        <dbReference type="Rhea" id="RHEA-COMP:9863"/>
        <dbReference type="Rhea" id="RHEA-COMP:11604"/>
        <dbReference type="ChEBI" id="CHEBI:15378"/>
        <dbReference type="ChEBI" id="CHEBI:29999"/>
        <dbReference type="ChEBI" id="CHEBI:30616"/>
        <dbReference type="ChEBI" id="CHEBI:83421"/>
        <dbReference type="ChEBI" id="CHEBI:456216"/>
        <dbReference type="EC" id="2.7.11.1"/>
    </reaction>
</comment>
<comment type="catalytic activity">
    <reaction evidence="2">
        <text>L-threonyl-[protein] + ATP = O-phospho-L-threonyl-[protein] + ADP + H(+)</text>
        <dbReference type="Rhea" id="RHEA:46608"/>
        <dbReference type="Rhea" id="RHEA-COMP:11060"/>
        <dbReference type="Rhea" id="RHEA-COMP:11605"/>
        <dbReference type="ChEBI" id="CHEBI:15378"/>
        <dbReference type="ChEBI" id="CHEBI:30013"/>
        <dbReference type="ChEBI" id="CHEBI:30616"/>
        <dbReference type="ChEBI" id="CHEBI:61977"/>
        <dbReference type="ChEBI" id="CHEBI:456216"/>
        <dbReference type="EC" id="2.7.11.1"/>
    </reaction>
</comment>
<comment type="subcellular location">
    <subcellularLocation>
        <location evidence="3">Cell membrane</location>
        <topology evidence="1">Single-pass type I membrane protein</topology>
    </subcellularLocation>
</comment>
<comment type="tissue specificity">
    <text evidence="3 4">Strongly expressed in the vascular system and trichomes of the leaves. Also expressed in guard cells, anthers, stigmas and germinating seeds, but not found in petals or roots. Increased susceptibility to the bacteria Pseudomonas syringae, characterized by stronger necrotic symptoms and higher bacterial proliferation (PubMed:25083911).</text>
</comment>
<comment type="disruption phenotype">
    <text evidence="3">Slight enhancement in abscisic acid-inhibited germination. Redundant with LECRKA4.2 and LECRKA4.3.</text>
</comment>
<comment type="similarity">
    <text evidence="7">In the C-terminal section; belongs to the protein kinase superfamily. Ser/Thr protein kinase family.</text>
</comment>
<comment type="similarity">
    <text evidence="7">In the N-terminal section; belongs to the leguminous lectin family.</text>
</comment>
<proteinExistence type="evidence at transcript level"/>
<keyword id="KW-0067">ATP-binding</keyword>
<keyword id="KW-1003">Cell membrane</keyword>
<keyword id="KW-0418">Kinase</keyword>
<keyword id="KW-0430">Lectin</keyword>
<keyword id="KW-0472">Membrane</keyword>
<keyword id="KW-0547">Nucleotide-binding</keyword>
<keyword id="KW-0611">Plant defense</keyword>
<keyword id="KW-0675">Receptor</keyword>
<keyword id="KW-1185">Reference proteome</keyword>
<keyword id="KW-0723">Serine/threonine-protein kinase</keyword>
<keyword id="KW-0732">Signal</keyword>
<keyword id="KW-0808">Transferase</keyword>
<keyword id="KW-0812">Transmembrane</keyword>
<keyword id="KW-1133">Transmembrane helix</keyword>
<accession>Q9M021</accession>
<reference key="1">
    <citation type="journal article" date="2000" name="Nature">
        <title>Sequence and analysis of chromosome 5 of the plant Arabidopsis thaliana.</title>
        <authorList>
            <person name="Tabata S."/>
            <person name="Kaneko T."/>
            <person name="Nakamura Y."/>
            <person name="Kotani H."/>
            <person name="Kato T."/>
            <person name="Asamizu E."/>
            <person name="Miyajima N."/>
            <person name="Sasamoto S."/>
            <person name="Kimura T."/>
            <person name="Hosouchi T."/>
            <person name="Kawashima K."/>
            <person name="Kohara M."/>
            <person name="Matsumoto M."/>
            <person name="Matsuno A."/>
            <person name="Muraki A."/>
            <person name="Nakayama S."/>
            <person name="Nakazaki N."/>
            <person name="Naruo K."/>
            <person name="Okumura S."/>
            <person name="Shinpo S."/>
            <person name="Takeuchi C."/>
            <person name="Wada T."/>
            <person name="Watanabe A."/>
            <person name="Yamada M."/>
            <person name="Yasuda M."/>
            <person name="Sato S."/>
            <person name="de la Bastide M."/>
            <person name="Huang E."/>
            <person name="Spiegel L."/>
            <person name="Gnoj L."/>
            <person name="O'Shaughnessy A."/>
            <person name="Preston R."/>
            <person name="Habermann K."/>
            <person name="Murray J."/>
            <person name="Johnson D."/>
            <person name="Rohlfing T."/>
            <person name="Nelson J."/>
            <person name="Stoneking T."/>
            <person name="Pepin K."/>
            <person name="Spieth J."/>
            <person name="Sekhon M."/>
            <person name="Armstrong J."/>
            <person name="Becker M."/>
            <person name="Belter E."/>
            <person name="Cordum H."/>
            <person name="Cordes M."/>
            <person name="Courtney L."/>
            <person name="Courtney W."/>
            <person name="Dante M."/>
            <person name="Du H."/>
            <person name="Edwards J."/>
            <person name="Fryman J."/>
            <person name="Haakensen B."/>
            <person name="Lamar E."/>
            <person name="Latreille P."/>
            <person name="Leonard S."/>
            <person name="Meyer R."/>
            <person name="Mulvaney E."/>
            <person name="Ozersky P."/>
            <person name="Riley A."/>
            <person name="Strowmatt C."/>
            <person name="Wagner-McPherson C."/>
            <person name="Wollam A."/>
            <person name="Yoakum M."/>
            <person name="Bell M."/>
            <person name="Dedhia N."/>
            <person name="Parnell L."/>
            <person name="Shah R."/>
            <person name="Rodriguez M."/>
            <person name="Hoon See L."/>
            <person name="Vil D."/>
            <person name="Baker J."/>
            <person name="Kirchoff K."/>
            <person name="Toth K."/>
            <person name="King L."/>
            <person name="Bahret A."/>
            <person name="Miller B."/>
            <person name="Marra M.A."/>
            <person name="Martienssen R."/>
            <person name="McCombie W.R."/>
            <person name="Wilson R.K."/>
            <person name="Murphy G."/>
            <person name="Bancroft I."/>
            <person name="Volckaert G."/>
            <person name="Wambutt R."/>
            <person name="Duesterhoeft A."/>
            <person name="Stiekema W."/>
            <person name="Pohl T."/>
            <person name="Entian K.-D."/>
            <person name="Terryn N."/>
            <person name="Hartley N."/>
            <person name="Bent E."/>
            <person name="Johnson S."/>
            <person name="Langham S.-A."/>
            <person name="McCullagh B."/>
            <person name="Robben J."/>
            <person name="Grymonprez B."/>
            <person name="Zimmermann W."/>
            <person name="Ramsperger U."/>
            <person name="Wedler H."/>
            <person name="Balke K."/>
            <person name="Wedler E."/>
            <person name="Peters S."/>
            <person name="van Staveren M."/>
            <person name="Dirkse W."/>
            <person name="Mooijman P."/>
            <person name="Klein Lankhorst R."/>
            <person name="Weitzenegger T."/>
            <person name="Bothe G."/>
            <person name="Rose M."/>
            <person name="Hauf J."/>
            <person name="Berneiser S."/>
            <person name="Hempel S."/>
            <person name="Feldpausch M."/>
            <person name="Lamberth S."/>
            <person name="Villarroel R."/>
            <person name="Gielen J."/>
            <person name="Ardiles W."/>
            <person name="Bents O."/>
            <person name="Lemcke K."/>
            <person name="Kolesov G."/>
            <person name="Mayer K.F.X."/>
            <person name="Rudd S."/>
            <person name="Schoof H."/>
            <person name="Schueller C."/>
            <person name="Zaccaria P."/>
            <person name="Mewes H.-W."/>
            <person name="Bevan M."/>
            <person name="Fransz P.F."/>
        </authorList>
    </citation>
    <scope>NUCLEOTIDE SEQUENCE [LARGE SCALE GENOMIC DNA]</scope>
    <source>
        <strain>cv. Columbia</strain>
    </source>
</reference>
<reference key="2">
    <citation type="journal article" date="2017" name="Plant J.">
        <title>Araport11: a complete reannotation of the Arabidopsis thaliana reference genome.</title>
        <authorList>
            <person name="Cheng C.Y."/>
            <person name="Krishnakumar V."/>
            <person name="Chan A.P."/>
            <person name="Thibaud-Nissen F."/>
            <person name="Schobel S."/>
            <person name="Town C.D."/>
        </authorList>
    </citation>
    <scope>GENOME REANNOTATION</scope>
    <source>
        <strain>cv. Columbia</strain>
    </source>
</reference>
<reference key="3">
    <citation type="journal article" date="2003" name="Science">
        <title>Empirical analysis of transcriptional activity in the Arabidopsis genome.</title>
        <authorList>
            <person name="Yamada K."/>
            <person name="Lim J."/>
            <person name="Dale J.M."/>
            <person name="Chen H."/>
            <person name="Shinn P."/>
            <person name="Palm C.J."/>
            <person name="Southwick A.M."/>
            <person name="Wu H.C."/>
            <person name="Kim C.J."/>
            <person name="Nguyen M."/>
            <person name="Pham P.K."/>
            <person name="Cheuk R.F."/>
            <person name="Karlin-Newmann G."/>
            <person name="Liu S.X."/>
            <person name="Lam B."/>
            <person name="Sakano H."/>
            <person name="Wu T."/>
            <person name="Yu G."/>
            <person name="Miranda M."/>
            <person name="Quach H.L."/>
            <person name="Tripp M."/>
            <person name="Chang C.H."/>
            <person name="Lee J.M."/>
            <person name="Toriumi M.J."/>
            <person name="Chan M.M."/>
            <person name="Tang C.C."/>
            <person name="Onodera C.S."/>
            <person name="Deng J.M."/>
            <person name="Akiyama K."/>
            <person name="Ansari Y."/>
            <person name="Arakawa T."/>
            <person name="Banh J."/>
            <person name="Banno F."/>
            <person name="Bowser L."/>
            <person name="Brooks S.Y."/>
            <person name="Carninci P."/>
            <person name="Chao Q."/>
            <person name="Choy N."/>
            <person name="Enju A."/>
            <person name="Goldsmith A.D."/>
            <person name="Gurjal M."/>
            <person name="Hansen N.F."/>
            <person name="Hayashizaki Y."/>
            <person name="Johnson-Hopson C."/>
            <person name="Hsuan V.W."/>
            <person name="Iida K."/>
            <person name="Karnes M."/>
            <person name="Khan S."/>
            <person name="Koesema E."/>
            <person name="Ishida J."/>
            <person name="Jiang P.X."/>
            <person name="Jones T."/>
            <person name="Kawai J."/>
            <person name="Kamiya A."/>
            <person name="Meyers C."/>
            <person name="Nakajima M."/>
            <person name="Narusaka M."/>
            <person name="Seki M."/>
            <person name="Sakurai T."/>
            <person name="Satou M."/>
            <person name="Tamse R."/>
            <person name="Vaysberg M."/>
            <person name="Wallender E.K."/>
            <person name="Wong C."/>
            <person name="Yamamura Y."/>
            <person name="Yuan S."/>
            <person name="Shinozaki K."/>
            <person name="Davis R.W."/>
            <person name="Theologis A."/>
            <person name="Ecker J.R."/>
        </authorList>
    </citation>
    <scope>NUCLEOTIDE SEQUENCE [LARGE SCALE MRNA]</scope>
    <source>
        <strain>cv. Columbia</strain>
    </source>
</reference>
<reference key="4">
    <citation type="journal article" date="2002" name="Crit. Rev. Plant Sci.">
        <title>Lectin receptor kinases in plants.</title>
        <authorList>
            <person name="Barre A."/>
            <person name="Herve C."/>
            <person name="Lescure B."/>
            <person name="Rouge P."/>
        </authorList>
    </citation>
    <scope>GENE FAMILY</scope>
</reference>
<reference key="5">
    <citation type="journal article" date="2009" name="J. Exp. Bot.">
        <title>Arabidopsis L-type lectin receptor kinases: phylogeny, classification, and expression profiles.</title>
        <authorList>
            <person name="Bouwmeester K."/>
            <person name="Govers F."/>
        </authorList>
    </citation>
    <scope>GENE FAMILY</scope>
    <scope>NOMENCLATURE</scope>
</reference>
<reference key="6">
    <citation type="journal article" date="2009" name="Plant Physiol.">
        <title>The Arabidopsis a4 subfamily of lectin receptor kinases negatively regulates abscisic acid response in seed germination.</title>
        <authorList>
            <person name="Xin Z."/>
            <person name="Wang A."/>
            <person name="Yang G."/>
            <person name="Gao P."/>
            <person name="Zheng Z.-L."/>
        </authorList>
    </citation>
    <scope>FUNCTION</scope>
    <scope>TISSUE SPECIFICITY</scope>
    <scope>SUBCELLULAR LOCATION</scope>
    <scope>DISRUPTION PHENOTYPE</scope>
</reference>
<reference key="7">
    <citation type="journal article" date="2014" name="Mol. Plant Microbe Interact.">
        <title>Phenotypic analyses of Arabidopsis T-DNA insertion lines and expression profiling reveal that multiple L-type lectin receptor kinases are involved in plant immunity.</title>
        <authorList>
            <person name="Wang Y."/>
            <person name="Bouwmeester K."/>
            <person name="Beseh P."/>
            <person name="Shan W."/>
            <person name="Govers F."/>
        </authorList>
    </citation>
    <scope>FUNCTION</scope>
    <scope>DISRUPTION PHENOTYPE</scope>
    <source>
        <strain>cv. Columbia</strain>
    </source>
</reference>
<gene>
    <name evidence="5" type="primary">LECRK62</name>
    <name evidence="6" type="synonym">LECRKA4.1</name>
    <name evidence="8" type="ordered locus">At5g01540</name>
    <name evidence="9" type="ORF">F7A7.60</name>
</gene>
<feature type="signal peptide" evidence="1">
    <location>
        <begin position="1"/>
        <end position="26"/>
    </location>
</feature>
<feature type="chain" id="PRO_0000364129" description="L-type lectin-domain containing receptor kinase VI.2">
    <location>
        <begin position="27"/>
        <end position="682"/>
    </location>
</feature>
<feature type="topological domain" description="Extracellular" evidence="1">
    <location>
        <begin position="27"/>
        <end position="310"/>
    </location>
</feature>
<feature type="transmembrane region" description="Helical" evidence="1">
    <location>
        <begin position="311"/>
        <end position="331"/>
    </location>
</feature>
<feature type="topological domain" description="Cytoplasmic" evidence="1">
    <location>
        <begin position="332"/>
        <end position="682"/>
    </location>
</feature>
<feature type="domain" description="Protein kinase" evidence="2">
    <location>
        <begin position="367"/>
        <end position="641"/>
    </location>
</feature>
<feature type="region of interest" description="Legume-lectin like" evidence="1">
    <location>
        <begin position="29"/>
        <end position="277"/>
    </location>
</feature>
<feature type="active site" description="Proton acceptor" evidence="2">
    <location>
        <position position="494"/>
    </location>
</feature>
<feature type="binding site" evidence="2">
    <location>
        <begin position="373"/>
        <end position="381"/>
    </location>
    <ligand>
        <name>ATP</name>
        <dbReference type="ChEBI" id="CHEBI:30616"/>
    </ligand>
</feature>
<feature type="binding site" evidence="2">
    <location>
        <position position="395"/>
    </location>
    <ligand>
        <name>ATP</name>
        <dbReference type="ChEBI" id="CHEBI:30616"/>
    </ligand>
</feature>
<evidence type="ECO:0000255" key="1"/>
<evidence type="ECO:0000255" key="2">
    <source>
        <dbReference type="PROSITE-ProRule" id="PRU00159"/>
    </source>
</evidence>
<evidence type="ECO:0000269" key="3">
    <source>
    </source>
</evidence>
<evidence type="ECO:0000269" key="4">
    <source>
    </source>
</evidence>
<evidence type="ECO:0000303" key="5">
    <source>
    </source>
</evidence>
<evidence type="ECO:0000303" key="6">
    <source ref="4"/>
</evidence>
<evidence type="ECO:0000305" key="7"/>
<evidence type="ECO:0000312" key="8">
    <source>
        <dbReference type="Araport" id="AT5G01540"/>
    </source>
</evidence>
<evidence type="ECO:0000312" key="9">
    <source>
        <dbReference type="EMBL" id="CAB82270.1"/>
    </source>
</evidence>
<sequence>MGTQRSMFIVSFLFKLFLFLSVHVRAQRTTTNFAFRGFNGNQSKIRIEGAAMIKPDGLLRLTDRKSNVTGTAFYHKPVRLLNRNSTNVTIRSFSTSFVFVIIPSSSSNKGFGFTFTLSPTPYRLNAGSAQYLGVFNKENNGDPRNHVFAVEFDTVQGSRDDNTDRIGNDIGLNYNSRTSDLQEPVVYYNNDDHNKKEDFQLESGNPIQALLEYDGATQMLNVTVYPARLGFKPTKPLISQHVPKLLEIVQEEMYVGFTASTGKGQSSAHYVMGWSFSSGGERPIADVLILSELPPPPPNKAKKEGLNSQVIVMIVALSAVMLVMLVLLFFFVMYKKRLGQEETLEDWEIDHPRRLRYRDLYVATDGFKKTGIIGTGGFGTVFKGKLPNSDPIAVKKIIPSSRQGVREFVAEIESLGKLRHKNLVNLQGWCKHKNDLLLIYDYIPNGSLDSLLYTVPRRSGAVLSWNARFQIAKGIASGLLYLHEEWEKIVIHRDVKPSNVLIDSKMNPRLGDFGLARLYERGTLSETTALVGTIGYMAPELSRNGNPSSASDVFAFGVLLLEIVCGRKPTDSGTFFLVDWVMELHANGEILSAIDPRLGSGYDGGEARLALAVGLLCCHQKPASRPSMRIVLRYLNGEENVPEIDDEWGYSKSSRSEFGSKLVGYVSSTSITRVSSTSRISQ</sequence>
<protein>
    <recommendedName>
        <fullName evidence="5">L-type lectin-domain containing receptor kinase VI.2</fullName>
        <shortName evidence="5">LecRK-VI.2</shortName>
        <ecNumber evidence="2">2.7.11.1</ecNumber>
    </recommendedName>
    <alternativeName>
        <fullName evidence="6">Lectin receptor kinase A4.1</fullName>
    </alternativeName>
</protein>
<name>LRK62_ARATH</name>
<organism>
    <name type="scientific">Arabidopsis thaliana</name>
    <name type="common">Mouse-ear cress</name>
    <dbReference type="NCBI Taxonomy" id="3702"/>
    <lineage>
        <taxon>Eukaryota</taxon>
        <taxon>Viridiplantae</taxon>
        <taxon>Streptophyta</taxon>
        <taxon>Embryophyta</taxon>
        <taxon>Tracheophyta</taxon>
        <taxon>Spermatophyta</taxon>
        <taxon>Magnoliopsida</taxon>
        <taxon>eudicotyledons</taxon>
        <taxon>Gunneridae</taxon>
        <taxon>Pentapetalae</taxon>
        <taxon>rosids</taxon>
        <taxon>malvids</taxon>
        <taxon>Brassicales</taxon>
        <taxon>Brassicaceae</taxon>
        <taxon>Camelineae</taxon>
        <taxon>Arabidopsis</taxon>
    </lineage>
</organism>